<name>LIX1_HUMAN</name>
<accession>Q8N485</accession>
<accession>A8K4R9</accession>
<accession>Q8N7I2</accession>
<reference key="1">
    <citation type="journal article" date="2004" name="Nat. Genet.">
        <title>Complete sequencing and characterization of 21,243 full-length human cDNAs.</title>
        <authorList>
            <person name="Ota T."/>
            <person name="Suzuki Y."/>
            <person name="Nishikawa T."/>
            <person name="Otsuki T."/>
            <person name="Sugiyama T."/>
            <person name="Irie R."/>
            <person name="Wakamatsu A."/>
            <person name="Hayashi K."/>
            <person name="Sato H."/>
            <person name="Nagai K."/>
            <person name="Kimura K."/>
            <person name="Makita H."/>
            <person name="Sekine M."/>
            <person name="Obayashi M."/>
            <person name="Nishi T."/>
            <person name="Shibahara T."/>
            <person name="Tanaka T."/>
            <person name="Ishii S."/>
            <person name="Yamamoto J."/>
            <person name="Saito K."/>
            <person name="Kawai Y."/>
            <person name="Isono Y."/>
            <person name="Nakamura Y."/>
            <person name="Nagahari K."/>
            <person name="Murakami K."/>
            <person name="Yasuda T."/>
            <person name="Iwayanagi T."/>
            <person name="Wagatsuma M."/>
            <person name="Shiratori A."/>
            <person name="Sudo H."/>
            <person name="Hosoiri T."/>
            <person name="Kaku Y."/>
            <person name="Kodaira H."/>
            <person name="Kondo H."/>
            <person name="Sugawara M."/>
            <person name="Takahashi M."/>
            <person name="Kanda K."/>
            <person name="Yokoi T."/>
            <person name="Furuya T."/>
            <person name="Kikkawa E."/>
            <person name="Omura Y."/>
            <person name="Abe K."/>
            <person name="Kamihara K."/>
            <person name="Katsuta N."/>
            <person name="Sato K."/>
            <person name="Tanikawa M."/>
            <person name="Yamazaki M."/>
            <person name="Ninomiya K."/>
            <person name="Ishibashi T."/>
            <person name="Yamashita H."/>
            <person name="Murakawa K."/>
            <person name="Fujimori K."/>
            <person name="Tanai H."/>
            <person name="Kimata M."/>
            <person name="Watanabe M."/>
            <person name="Hiraoka S."/>
            <person name="Chiba Y."/>
            <person name="Ishida S."/>
            <person name="Ono Y."/>
            <person name="Takiguchi S."/>
            <person name="Watanabe S."/>
            <person name="Yosida M."/>
            <person name="Hotuta T."/>
            <person name="Kusano J."/>
            <person name="Kanehori K."/>
            <person name="Takahashi-Fujii A."/>
            <person name="Hara H."/>
            <person name="Tanase T.-O."/>
            <person name="Nomura Y."/>
            <person name="Togiya S."/>
            <person name="Komai F."/>
            <person name="Hara R."/>
            <person name="Takeuchi K."/>
            <person name="Arita M."/>
            <person name="Imose N."/>
            <person name="Musashino K."/>
            <person name="Yuuki H."/>
            <person name="Oshima A."/>
            <person name="Sasaki N."/>
            <person name="Aotsuka S."/>
            <person name="Yoshikawa Y."/>
            <person name="Matsunawa H."/>
            <person name="Ichihara T."/>
            <person name="Shiohata N."/>
            <person name="Sano S."/>
            <person name="Moriya S."/>
            <person name="Momiyama H."/>
            <person name="Satoh N."/>
            <person name="Takami S."/>
            <person name="Terashima Y."/>
            <person name="Suzuki O."/>
            <person name="Nakagawa S."/>
            <person name="Senoh A."/>
            <person name="Mizoguchi H."/>
            <person name="Goto Y."/>
            <person name="Shimizu F."/>
            <person name="Wakebe H."/>
            <person name="Hishigaki H."/>
            <person name="Watanabe T."/>
            <person name="Sugiyama A."/>
            <person name="Takemoto M."/>
            <person name="Kawakami B."/>
            <person name="Yamazaki M."/>
            <person name="Watanabe K."/>
            <person name="Kumagai A."/>
            <person name="Itakura S."/>
            <person name="Fukuzumi Y."/>
            <person name="Fujimori Y."/>
            <person name="Komiyama M."/>
            <person name="Tashiro H."/>
            <person name="Tanigami A."/>
            <person name="Fujiwara T."/>
            <person name="Ono T."/>
            <person name="Yamada K."/>
            <person name="Fujii Y."/>
            <person name="Ozaki K."/>
            <person name="Hirao M."/>
            <person name="Ohmori Y."/>
            <person name="Kawabata A."/>
            <person name="Hikiji T."/>
            <person name="Kobatake N."/>
            <person name="Inagaki H."/>
            <person name="Ikema Y."/>
            <person name="Okamoto S."/>
            <person name="Okitani R."/>
            <person name="Kawakami T."/>
            <person name="Noguchi S."/>
            <person name="Itoh T."/>
            <person name="Shigeta K."/>
            <person name="Senba T."/>
            <person name="Matsumura K."/>
            <person name="Nakajima Y."/>
            <person name="Mizuno T."/>
            <person name="Morinaga M."/>
            <person name="Sasaki M."/>
            <person name="Togashi T."/>
            <person name="Oyama M."/>
            <person name="Hata H."/>
            <person name="Watanabe M."/>
            <person name="Komatsu T."/>
            <person name="Mizushima-Sugano J."/>
            <person name="Satoh T."/>
            <person name="Shirai Y."/>
            <person name="Takahashi Y."/>
            <person name="Nakagawa K."/>
            <person name="Okumura K."/>
            <person name="Nagase T."/>
            <person name="Nomura N."/>
            <person name="Kikuchi H."/>
            <person name="Masuho Y."/>
            <person name="Yamashita R."/>
            <person name="Nakai K."/>
            <person name="Yada T."/>
            <person name="Nakamura Y."/>
            <person name="Ohara O."/>
            <person name="Isogai T."/>
            <person name="Sugano S."/>
        </authorList>
    </citation>
    <scope>NUCLEOTIDE SEQUENCE [LARGE SCALE MRNA]</scope>
    <source>
        <tissue>Brain</tissue>
    </source>
</reference>
<reference key="2">
    <citation type="submission" date="2005-07" db="EMBL/GenBank/DDBJ databases">
        <authorList>
            <person name="Mural R.J."/>
            <person name="Istrail S."/>
            <person name="Sutton G.G."/>
            <person name="Florea L."/>
            <person name="Halpern A.L."/>
            <person name="Mobarry C.M."/>
            <person name="Lippert R."/>
            <person name="Walenz B."/>
            <person name="Shatkay H."/>
            <person name="Dew I."/>
            <person name="Miller J.R."/>
            <person name="Flanigan M.J."/>
            <person name="Edwards N.J."/>
            <person name="Bolanos R."/>
            <person name="Fasulo D."/>
            <person name="Halldorsson B.V."/>
            <person name="Hannenhalli S."/>
            <person name="Turner R."/>
            <person name="Yooseph S."/>
            <person name="Lu F."/>
            <person name="Nusskern D.R."/>
            <person name="Shue B.C."/>
            <person name="Zheng X.H."/>
            <person name="Zhong F."/>
            <person name="Delcher A.L."/>
            <person name="Huson D.H."/>
            <person name="Kravitz S.A."/>
            <person name="Mouchard L."/>
            <person name="Reinert K."/>
            <person name="Remington K.A."/>
            <person name="Clark A.G."/>
            <person name="Waterman M.S."/>
            <person name="Eichler E.E."/>
            <person name="Adams M.D."/>
            <person name="Hunkapiller M.W."/>
            <person name="Myers E.W."/>
            <person name="Venter J.C."/>
        </authorList>
    </citation>
    <scope>NUCLEOTIDE SEQUENCE [LARGE SCALE GENOMIC DNA]</scope>
</reference>
<reference key="3">
    <citation type="journal article" date="2004" name="Genome Res.">
        <title>The status, quality, and expansion of the NIH full-length cDNA project: the Mammalian Gene Collection (MGC).</title>
        <authorList>
            <consortium name="The MGC Project Team"/>
        </authorList>
    </citation>
    <scope>NUCLEOTIDE SEQUENCE [LARGE SCALE MRNA]</scope>
    <scope>VARIANT ILE-3</scope>
    <source>
        <tissue>Brain</tissue>
    </source>
</reference>
<organism>
    <name type="scientific">Homo sapiens</name>
    <name type="common">Human</name>
    <dbReference type="NCBI Taxonomy" id="9606"/>
    <lineage>
        <taxon>Eukaryota</taxon>
        <taxon>Metazoa</taxon>
        <taxon>Chordata</taxon>
        <taxon>Craniata</taxon>
        <taxon>Vertebrata</taxon>
        <taxon>Euteleostomi</taxon>
        <taxon>Mammalia</taxon>
        <taxon>Eutheria</taxon>
        <taxon>Euarchontoglires</taxon>
        <taxon>Primates</taxon>
        <taxon>Haplorrhini</taxon>
        <taxon>Catarrhini</taxon>
        <taxon>Hominidae</taxon>
        <taxon>Homo</taxon>
    </lineage>
</organism>
<gene>
    <name type="primary">LIX1</name>
    <name type="synonym">C5orf11</name>
</gene>
<dbReference type="EMBL" id="AK098400">
    <property type="protein sequence ID" value="BAC05298.1"/>
    <property type="molecule type" value="mRNA"/>
</dbReference>
<dbReference type="EMBL" id="AK291034">
    <property type="protein sequence ID" value="BAF83723.1"/>
    <property type="molecule type" value="mRNA"/>
</dbReference>
<dbReference type="EMBL" id="CH471084">
    <property type="protein sequence ID" value="EAW96087.1"/>
    <property type="molecule type" value="Genomic_DNA"/>
</dbReference>
<dbReference type="EMBL" id="BC036467">
    <property type="protein sequence ID" value="AAH36467.1"/>
    <property type="molecule type" value="mRNA"/>
</dbReference>
<dbReference type="CCDS" id="CCDS4088.1"/>
<dbReference type="RefSeq" id="NP_694966.3">
    <property type="nucleotide sequence ID" value="NM_153234.4"/>
</dbReference>
<dbReference type="BioGRID" id="127946">
    <property type="interactions" value="5"/>
</dbReference>
<dbReference type="FunCoup" id="Q8N485">
    <property type="interactions" value="388"/>
</dbReference>
<dbReference type="IntAct" id="Q8N485">
    <property type="interactions" value="6"/>
</dbReference>
<dbReference type="STRING" id="9606.ENSP00000274382"/>
<dbReference type="PhosphoSitePlus" id="Q8N485"/>
<dbReference type="BioMuta" id="LIX1"/>
<dbReference type="DMDM" id="126302565"/>
<dbReference type="PaxDb" id="9606-ENSP00000274382"/>
<dbReference type="PeptideAtlas" id="Q8N485"/>
<dbReference type="ProteomicsDB" id="71894"/>
<dbReference type="Antibodypedia" id="25115">
    <property type="antibodies" value="168 antibodies from 21 providers"/>
</dbReference>
<dbReference type="DNASU" id="167410"/>
<dbReference type="Ensembl" id="ENST00000274382.9">
    <property type="protein sequence ID" value="ENSP00000274382.4"/>
    <property type="gene ID" value="ENSG00000145721.12"/>
</dbReference>
<dbReference type="GeneID" id="167410"/>
<dbReference type="KEGG" id="hsa:167410"/>
<dbReference type="MANE-Select" id="ENST00000274382.9">
    <property type="protein sequence ID" value="ENSP00000274382.4"/>
    <property type="RefSeq nucleotide sequence ID" value="NM_153234.5"/>
    <property type="RefSeq protein sequence ID" value="NP_694966.3"/>
</dbReference>
<dbReference type="UCSC" id="uc003kmy.5">
    <property type="organism name" value="human"/>
</dbReference>
<dbReference type="AGR" id="HGNC:18581"/>
<dbReference type="CTD" id="167410"/>
<dbReference type="DisGeNET" id="167410"/>
<dbReference type="GeneCards" id="LIX1"/>
<dbReference type="HGNC" id="HGNC:18581">
    <property type="gene designation" value="LIX1"/>
</dbReference>
<dbReference type="HPA" id="ENSG00000145721">
    <property type="expression patterns" value="Group enriched (brain, retina)"/>
</dbReference>
<dbReference type="MIM" id="610466">
    <property type="type" value="gene"/>
</dbReference>
<dbReference type="neXtProt" id="NX_Q8N485"/>
<dbReference type="OpenTargets" id="ENSG00000145721"/>
<dbReference type="PharmGKB" id="PA38353"/>
<dbReference type="VEuPathDB" id="HostDB:ENSG00000145721"/>
<dbReference type="eggNOG" id="ENOG502QR91">
    <property type="taxonomic scope" value="Eukaryota"/>
</dbReference>
<dbReference type="GeneTree" id="ENSGT00390000005869"/>
<dbReference type="HOGENOM" id="CLU_065651_1_1_1"/>
<dbReference type="InParanoid" id="Q8N485"/>
<dbReference type="OMA" id="AMLQEFW"/>
<dbReference type="OrthoDB" id="6250996at2759"/>
<dbReference type="PAN-GO" id="Q8N485">
    <property type="GO annotations" value="2 GO annotations based on evolutionary models"/>
</dbReference>
<dbReference type="PhylomeDB" id="Q8N485"/>
<dbReference type="TreeFam" id="TF324035"/>
<dbReference type="PathwayCommons" id="Q8N485"/>
<dbReference type="SignaLink" id="Q8N485"/>
<dbReference type="BioGRID-ORCS" id="167410">
    <property type="hits" value="9 hits in 1139 CRISPR screens"/>
</dbReference>
<dbReference type="GenomeRNAi" id="167410"/>
<dbReference type="Pharos" id="Q8N485">
    <property type="development level" value="Tbio"/>
</dbReference>
<dbReference type="PRO" id="PR:Q8N485"/>
<dbReference type="Proteomes" id="UP000005640">
    <property type="component" value="Chromosome 5"/>
</dbReference>
<dbReference type="RNAct" id="Q8N485">
    <property type="molecule type" value="protein"/>
</dbReference>
<dbReference type="Bgee" id="ENSG00000145721">
    <property type="expression patterns" value="Expressed in lateral globus pallidus and 103 other cell types or tissues"/>
</dbReference>
<dbReference type="ExpressionAtlas" id="Q8N485">
    <property type="expression patterns" value="baseline and differential"/>
</dbReference>
<dbReference type="GO" id="GO:0005737">
    <property type="term" value="C:cytoplasm"/>
    <property type="evidence" value="ECO:0000318"/>
    <property type="project" value="GO_Central"/>
</dbReference>
<dbReference type="GO" id="GO:0097352">
    <property type="term" value="P:autophagosome maturation"/>
    <property type="evidence" value="ECO:0000318"/>
    <property type="project" value="GO_Central"/>
</dbReference>
<dbReference type="InterPro" id="IPR051436">
    <property type="entry name" value="Autophagy-related_EPG5"/>
</dbReference>
<dbReference type="InterPro" id="IPR029270">
    <property type="entry name" value="LIX1"/>
</dbReference>
<dbReference type="PANTHER" id="PTHR31139">
    <property type="entry name" value="ECTOPIC P GRANULES PROTEIN 5 HOMOLOG"/>
    <property type="match status" value="1"/>
</dbReference>
<dbReference type="PANTHER" id="PTHR31139:SF5">
    <property type="entry name" value="PROTEIN LIMB EXPRESSION 1 HOMOLOG"/>
    <property type="match status" value="1"/>
</dbReference>
<dbReference type="Pfam" id="PF14954">
    <property type="entry name" value="LIX1"/>
    <property type="match status" value="1"/>
</dbReference>
<keyword id="KW-1185">Reference proteome</keyword>
<protein>
    <recommendedName>
        <fullName>Protein limb expression 1 homolog</fullName>
    </recommendedName>
</protein>
<proteinExistence type="evidence at protein level"/>
<sequence length="282" mass="31891">MDRTLESLRHIIAQVLPHRDPALVFKDLNVVSMLQEFWESKQQQKAAFPSEGVVVYESLPAPGPPFVSYVTLPGGSCFGNFQCCLSRAEARRDAAKVALINSLFNELPSRRITKEFIMESVQEAVASTSGTLDDADDPSTSVGAYHYMLESNMGKTMLEFQELMTIFQLLHWNGSLKALRETKCSRQEVISYYSQYSLDEKMRSHMALDWIMKERDSPGIVSQELRMALRQLEEARKAGQELRFYKEKKEILSLALTQICSDPDTSSPSDDQLSLTALCGYH</sequence>
<evidence type="ECO:0000269" key="1">
    <source>
    </source>
</evidence>
<evidence type="ECO:0000305" key="2"/>
<comment type="interaction">
    <interactant intactId="EBI-10694501">
        <id>Q8N485</id>
    </interactant>
    <interactant intactId="EBI-11989522">
        <id>Q7Z589-5</id>
        <label>EMSY</label>
    </interactant>
    <organismsDiffer>false</organismsDiffer>
    <experiments>3</experiments>
</comment>
<comment type="interaction">
    <interactant intactId="EBI-10694501">
        <id>Q8N485</id>
    </interactant>
    <interactant intactId="EBI-1752811">
        <id>Q9BQ89</id>
        <label>FAM110A</label>
    </interactant>
    <organismsDiffer>false</organismsDiffer>
    <experiments>3</experiments>
</comment>
<comment type="interaction">
    <interactant intactId="EBI-10694501">
        <id>Q8N485</id>
    </interactant>
    <interactant intactId="EBI-1055254">
        <id>Q8WXH2</id>
        <label>JPH3</label>
    </interactant>
    <organismsDiffer>false</organismsDiffer>
    <experiments>3</experiments>
</comment>
<comment type="interaction">
    <interactant intactId="EBI-10694501">
        <id>Q8N485</id>
    </interactant>
    <interactant intactId="EBI-740411">
        <id>Q96A04</id>
        <label>TSACC</label>
    </interactant>
    <organismsDiffer>false</organismsDiffer>
    <experiments>3</experiments>
</comment>
<comment type="similarity">
    <text evidence="2">Belongs to the LIX1 family.</text>
</comment>
<feature type="chain" id="PRO_0000232869" description="Protein limb expression 1 homolog">
    <location>
        <begin position="1"/>
        <end position="282"/>
    </location>
</feature>
<feature type="sequence variant" id="VAR_026039" description="In dbSNP:rs11558079." evidence="1">
    <original>R</original>
    <variation>I</variation>
    <location>
        <position position="3"/>
    </location>
</feature>